<dbReference type="EC" id="6.1.1.4" evidence="1"/>
<dbReference type="EMBL" id="CP000887">
    <property type="protein sequence ID" value="ACD73178.1"/>
    <property type="molecule type" value="Genomic_DNA"/>
</dbReference>
<dbReference type="RefSeq" id="WP_002969611.1">
    <property type="nucleotide sequence ID" value="NC_010742.1"/>
</dbReference>
<dbReference type="SMR" id="B2S7N1"/>
<dbReference type="GeneID" id="93017853"/>
<dbReference type="KEGG" id="bmc:BAbS19_I16960"/>
<dbReference type="HOGENOM" id="CLU_004427_0_0_5"/>
<dbReference type="Proteomes" id="UP000002565">
    <property type="component" value="Chromosome 1"/>
</dbReference>
<dbReference type="GO" id="GO:0005829">
    <property type="term" value="C:cytosol"/>
    <property type="evidence" value="ECO:0007669"/>
    <property type="project" value="TreeGrafter"/>
</dbReference>
<dbReference type="GO" id="GO:0002161">
    <property type="term" value="F:aminoacyl-tRNA deacylase activity"/>
    <property type="evidence" value="ECO:0007669"/>
    <property type="project" value="InterPro"/>
</dbReference>
<dbReference type="GO" id="GO:0005524">
    <property type="term" value="F:ATP binding"/>
    <property type="evidence" value="ECO:0007669"/>
    <property type="project" value="UniProtKB-UniRule"/>
</dbReference>
<dbReference type="GO" id="GO:0004823">
    <property type="term" value="F:leucine-tRNA ligase activity"/>
    <property type="evidence" value="ECO:0007669"/>
    <property type="project" value="UniProtKB-UniRule"/>
</dbReference>
<dbReference type="GO" id="GO:0006429">
    <property type="term" value="P:leucyl-tRNA aminoacylation"/>
    <property type="evidence" value="ECO:0007669"/>
    <property type="project" value="UniProtKB-UniRule"/>
</dbReference>
<dbReference type="CDD" id="cd07958">
    <property type="entry name" value="Anticodon_Ia_Leu_BEm"/>
    <property type="match status" value="1"/>
</dbReference>
<dbReference type="CDD" id="cd00812">
    <property type="entry name" value="LeuRS_core"/>
    <property type="match status" value="1"/>
</dbReference>
<dbReference type="FunFam" id="1.10.730.10:FF:000002">
    <property type="entry name" value="Leucine--tRNA ligase"/>
    <property type="match status" value="1"/>
</dbReference>
<dbReference type="FunFam" id="3.40.50.620:FF:000003">
    <property type="entry name" value="Leucine--tRNA ligase"/>
    <property type="match status" value="1"/>
</dbReference>
<dbReference type="Gene3D" id="2.20.28.290">
    <property type="match status" value="1"/>
</dbReference>
<dbReference type="Gene3D" id="3.10.20.590">
    <property type="match status" value="1"/>
</dbReference>
<dbReference type="Gene3D" id="3.40.50.620">
    <property type="entry name" value="HUPs"/>
    <property type="match status" value="2"/>
</dbReference>
<dbReference type="Gene3D" id="1.10.730.10">
    <property type="entry name" value="Isoleucyl-tRNA Synthetase, Domain 1"/>
    <property type="match status" value="1"/>
</dbReference>
<dbReference type="Gene3D" id="3.90.740.10">
    <property type="entry name" value="Valyl/Leucyl/Isoleucyl-tRNA synthetase, editing domain"/>
    <property type="match status" value="1"/>
</dbReference>
<dbReference type="HAMAP" id="MF_00049_B">
    <property type="entry name" value="Leu_tRNA_synth_B"/>
    <property type="match status" value="1"/>
</dbReference>
<dbReference type="InterPro" id="IPR001412">
    <property type="entry name" value="aa-tRNA-synth_I_CS"/>
</dbReference>
<dbReference type="InterPro" id="IPR002300">
    <property type="entry name" value="aa-tRNA-synth_Ia"/>
</dbReference>
<dbReference type="InterPro" id="IPR002302">
    <property type="entry name" value="Leu-tRNA-ligase"/>
</dbReference>
<dbReference type="InterPro" id="IPR025709">
    <property type="entry name" value="Leu_tRNA-synth_edit"/>
</dbReference>
<dbReference type="InterPro" id="IPR013155">
    <property type="entry name" value="M/V/L/I-tRNA-synth_anticd-bd"/>
</dbReference>
<dbReference type="InterPro" id="IPR015413">
    <property type="entry name" value="Methionyl/Leucyl_tRNA_Synth"/>
</dbReference>
<dbReference type="InterPro" id="IPR014729">
    <property type="entry name" value="Rossmann-like_a/b/a_fold"/>
</dbReference>
<dbReference type="InterPro" id="IPR009080">
    <property type="entry name" value="tRNAsynth_Ia_anticodon-bd"/>
</dbReference>
<dbReference type="InterPro" id="IPR009008">
    <property type="entry name" value="Val/Leu/Ile-tRNA-synth_edit"/>
</dbReference>
<dbReference type="NCBIfam" id="TIGR00396">
    <property type="entry name" value="leuS_bact"/>
    <property type="match status" value="1"/>
</dbReference>
<dbReference type="PANTHER" id="PTHR43740:SF2">
    <property type="entry name" value="LEUCINE--TRNA LIGASE, MITOCHONDRIAL"/>
    <property type="match status" value="1"/>
</dbReference>
<dbReference type="PANTHER" id="PTHR43740">
    <property type="entry name" value="LEUCYL-TRNA SYNTHETASE"/>
    <property type="match status" value="1"/>
</dbReference>
<dbReference type="Pfam" id="PF08264">
    <property type="entry name" value="Anticodon_1"/>
    <property type="match status" value="1"/>
</dbReference>
<dbReference type="Pfam" id="PF00133">
    <property type="entry name" value="tRNA-synt_1"/>
    <property type="match status" value="2"/>
</dbReference>
<dbReference type="Pfam" id="PF13603">
    <property type="entry name" value="tRNA-synt_1_2"/>
    <property type="match status" value="1"/>
</dbReference>
<dbReference type="Pfam" id="PF09334">
    <property type="entry name" value="tRNA-synt_1g"/>
    <property type="match status" value="1"/>
</dbReference>
<dbReference type="PRINTS" id="PR00985">
    <property type="entry name" value="TRNASYNTHLEU"/>
</dbReference>
<dbReference type="SUPFAM" id="SSF47323">
    <property type="entry name" value="Anticodon-binding domain of a subclass of class I aminoacyl-tRNA synthetases"/>
    <property type="match status" value="1"/>
</dbReference>
<dbReference type="SUPFAM" id="SSF52374">
    <property type="entry name" value="Nucleotidylyl transferase"/>
    <property type="match status" value="1"/>
</dbReference>
<dbReference type="SUPFAM" id="SSF50677">
    <property type="entry name" value="ValRS/IleRS/LeuRS editing domain"/>
    <property type="match status" value="1"/>
</dbReference>
<dbReference type="PROSITE" id="PS00178">
    <property type="entry name" value="AA_TRNA_LIGASE_I"/>
    <property type="match status" value="1"/>
</dbReference>
<gene>
    <name evidence="1" type="primary">leuS</name>
    <name type="ordered locus">BAbS19_I16960</name>
</gene>
<proteinExistence type="inferred from homology"/>
<organism>
    <name type="scientific">Brucella abortus (strain S19)</name>
    <dbReference type="NCBI Taxonomy" id="430066"/>
    <lineage>
        <taxon>Bacteria</taxon>
        <taxon>Pseudomonadati</taxon>
        <taxon>Pseudomonadota</taxon>
        <taxon>Alphaproteobacteria</taxon>
        <taxon>Hyphomicrobiales</taxon>
        <taxon>Brucellaceae</taxon>
        <taxon>Brucella/Ochrobactrum group</taxon>
        <taxon>Brucella</taxon>
    </lineage>
</organism>
<evidence type="ECO:0000255" key="1">
    <source>
        <dbReference type="HAMAP-Rule" id="MF_00049"/>
    </source>
</evidence>
<protein>
    <recommendedName>
        <fullName evidence="1">Leucine--tRNA ligase</fullName>
        <ecNumber evidence="1">6.1.1.4</ecNumber>
    </recommendedName>
    <alternativeName>
        <fullName evidence="1">Leucyl-tRNA synthetase</fullName>
        <shortName evidence="1">LeuRS</shortName>
    </alternativeName>
</protein>
<accession>B2S7N1</accession>
<feature type="chain" id="PRO_1000091295" description="Leucine--tRNA ligase">
    <location>
        <begin position="1"/>
        <end position="877"/>
    </location>
</feature>
<feature type="short sequence motif" description="'HIGH' region">
    <location>
        <begin position="43"/>
        <end position="53"/>
    </location>
</feature>
<feature type="short sequence motif" description="'KMSKS' region">
    <location>
        <begin position="628"/>
        <end position="632"/>
    </location>
</feature>
<feature type="binding site" evidence="1">
    <location>
        <position position="631"/>
    </location>
    <ligand>
        <name>ATP</name>
        <dbReference type="ChEBI" id="CHEBI:30616"/>
    </ligand>
</feature>
<reference key="1">
    <citation type="journal article" date="2008" name="PLoS ONE">
        <title>Genome sequence of Brucella abortus vaccine strain S19 compared to virulent strains yields candidate virulence genes.</title>
        <authorList>
            <person name="Crasta O.R."/>
            <person name="Folkerts O."/>
            <person name="Fei Z."/>
            <person name="Mane S.P."/>
            <person name="Evans C."/>
            <person name="Martino-Catt S."/>
            <person name="Bricker B."/>
            <person name="Yu G."/>
            <person name="Du L."/>
            <person name="Sobral B.W."/>
        </authorList>
    </citation>
    <scope>NUCLEOTIDE SEQUENCE [LARGE SCALE GENOMIC DNA]</scope>
    <source>
        <strain>S19</strain>
    </source>
</reference>
<comment type="catalytic activity">
    <reaction evidence="1">
        <text>tRNA(Leu) + L-leucine + ATP = L-leucyl-tRNA(Leu) + AMP + diphosphate</text>
        <dbReference type="Rhea" id="RHEA:11688"/>
        <dbReference type="Rhea" id="RHEA-COMP:9613"/>
        <dbReference type="Rhea" id="RHEA-COMP:9622"/>
        <dbReference type="ChEBI" id="CHEBI:30616"/>
        <dbReference type="ChEBI" id="CHEBI:33019"/>
        <dbReference type="ChEBI" id="CHEBI:57427"/>
        <dbReference type="ChEBI" id="CHEBI:78442"/>
        <dbReference type="ChEBI" id="CHEBI:78494"/>
        <dbReference type="ChEBI" id="CHEBI:456215"/>
        <dbReference type="EC" id="6.1.1.4"/>
    </reaction>
</comment>
<comment type="subcellular location">
    <subcellularLocation>
        <location evidence="1">Cytoplasm</location>
    </subcellularLocation>
</comment>
<comment type="similarity">
    <text evidence="1">Belongs to the class-I aminoacyl-tRNA synthetase family.</text>
</comment>
<name>SYL_BRUA1</name>
<keyword id="KW-0030">Aminoacyl-tRNA synthetase</keyword>
<keyword id="KW-0067">ATP-binding</keyword>
<keyword id="KW-0963">Cytoplasm</keyword>
<keyword id="KW-0436">Ligase</keyword>
<keyword id="KW-0547">Nucleotide-binding</keyword>
<keyword id="KW-0648">Protein biosynthesis</keyword>
<sequence>MAAERYNPRVAEAHWQKVWEENRTFETDNSDSREKYYVLEMFPYPSGRIHMGHVRNYAMGDVVARYKRAKGFNVLHPMGWDAFGMPAENAAMQNKVHPKEWTYQNIATMKRQLKSMGLSLDWSREFATCDVEYYHRQQMLFIDLYEKGLVTRKTSKVNWDPVDNTVLANEQVVDGRGWRSGALVEQRELTQWFFKITDFSEELLAGLDTLDQWPEKVRLMQRNWIGKSEGLQVRFALAAGTAPAGFSEVEVYTTRPDTLFGAAFVAISADHPLAKKLSEGNAALSSFIEECHQQGTSLAALETAEKKGFDTGIKVKHPFDDNWELPVYVANFVLMEYGTGAVFGCPAHDQRDLDFANKYKLKVTPVVLPKGEDAASFSIGETAYTDDGVMINSRFLDGMTPEAAFNEVASRLEKTDLVGRPQAVRKVQFRLRDWGISRQRYWGCPIPMIHCESCGVNPVPRADLPVKLPDDVEFDRPGNPLDRHATWRHVKCPKCGGDARRETDTMDTFVDSSWYYTRFTAPWENEPTNRKAADHWLPVDQYIGGIEHAILHLLYSRFFTRAMKVAGHVGVDEPFKGLFTQGMVVHETYKANGQWVSPADIRIEEIDGKRVATMLDSGAPVEIGSIEKMSKSKKNVVDPDDIIASYGADTARWFVLSDSPPERDVIWTEAGAEGAHRFVQRIWRLVAEAAPALKDVAPKAGTQGEALGVSKAVHKAVKAVGDDIEKLAFNRGVARLYELVNTLSGALQQAADGKADAEMKGALREATEMLVLMTAPMMPHLAEQCLAELGGKVAGKETLVARAPWPVFDPALVVENEIVLPVQINGKKRGDLTIARDADQASIQQAVLELDFVKAALNGGSPKKIIVVPQRIVNVVA</sequence>